<comment type="function">
    <text evidence="1">Catalyzes the GTP-dependent ribosomal translocation step during translation elongation. During this step, the ribosome changes from the pre-translocational (PRE) to the post-translocational (POST) state as the newly formed A-site-bound peptidyl-tRNA and P-site-bound deacylated tRNA move to the P and E sites, respectively. Catalyzes the coordinated movement of the two tRNA molecules, the mRNA and conformational changes in the ribosome.</text>
</comment>
<comment type="subcellular location">
    <subcellularLocation>
        <location evidence="1">Cytoplasm</location>
    </subcellularLocation>
</comment>
<comment type="similarity">
    <text evidence="1">Belongs to the TRAFAC class translation factor GTPase superfamily. Classic translation factor GTPase family. EF-G/EF-2 subfamily.</text>
</comment>
<name>EFG_ALKOO</name>
<protein>
    <recommendedName>
        <fullName evidence="1">Elongation factor G</fullName>
        <shortName evidence="1">EF-G</shortName>
    </recommendedName>
</protein>
<proteinExistence type="inferred from homology"/>
<keyword id="KW-0963">Cytoplasm</keyword>
<keyword id="KW-0251">Elongation factor</keyword>
<keyword id="KW-0342">GTP-binding</keyword>
<keyword id="KW-0547">Nucleotide-binding</keyword>
<keyword id="KW-0648">Protein biosynthesis</keyword>
<keyword id="KW-1185">Reference proteome</keyword>
<evidence type="ECO:0000255" key="1">
    <source>
        <dbReference type="HAMAP-Rule" id="MF_00054"/>
    </source>
</evidence>
<organism>
    <name type="scientific">Alkaliphilus oremlandii (strain OhILAs)</name>
    <name type="common">Clostridium oremlandii (strain OhILAs)</name>
    <dbReference type="NCBI Taxonomy" id="350688"/>
    <lineage>
        <taxon>Bacteria</taxon>
        <taxon>Bacillati</taxon>
        <taxon>Bacillota</taxon>
        <taxon>Clostridia</taxon>
        <taxon>Peptostreptococcales</taxon>
        <taxon>Natronincolaceae</taxon>
        <taxon>Alkaliphilus</taxon>
    </lineage>
</organism>
<reference key="1">
    <citation type="submission" date="2007-10" db="EMBL/GenBank/DDBJ databases">
        <title>Complete genome of Alkaliphilus oremlandii OhILAs.</title>
        <authorList>
            <person name="Copeland A."/>
            <person name="Lucas S."/>
            <person name="Lapidus A."/>
            <person name="Barry K."/>
            <person name="Detter J.C."/>
            <person name="Glavina del Rio T."/>
            <person name="Hammon N."/>
            <person name="Israni S."/>
            <person name="Dalin E."/>
            <person name="Tice H."/>
            <person name="Pitluck S."/>
            <person name="Chain P."/>
            <person name="Malfatti S."/>
            <person name="Shin M."/>
            <person name="Vergez L."/>
            <person name="Schmutz J."/>
            <person name="Larimer F."/>
            <person name="Land M."/>
            <person name="Hauser L."/>
            <person name="Kyrpides N."/>
            <person name="Mikhailova N."/>
            <person name="Stolz J.F."/>
            <person name="Dawson A."/>
            <person name="Fisher E."/>
            <person name="Crable B."/>
            <person name="Perera E."/>
            <person name="Lisak J."/>
            <person name="Ranganathan M."/>
            <person name="Basu P."/>
            <person name="Richardson P."/>
        </authorList>
    </citation>
    <scope>NUCLEOTIDE SEQUENCE [LARGE SCALE GENOMIC DNA]</scope>
    <source>
        <strain>OhILAs</strain>
    </source>
</reference>
<gene>
    <name evidence="1" type="primary">fusA</name>
    <name type="ordered locus">Clos_0489</name>
</gene>
<dbReference type="EMBL" id="CP000853">
    <property type="protein sequence ID" value="ABW18051.1"/>
    <property type="molecule type" value="Genomic_DNA"/>
</dbReference>
<dbReference type="RefSeq" id="WP_012158366.1">
    <property type="nucleotide sequence ID" value="NC_009922.1"/>
</dbReference>
<dbReference type="SMR" id="A8MLD7"/>
<dbReference type="STRING" id="350688.Clos_0489"/>
<dbReference type="KEGG" id="aoe:Clos_0489"/>
<dbReference type="eggNOG" id="COG0480">
    <property type="taxonomic scope" value="Bacteria"/>
</dbReference>
<dbReference type="HOGENOM" id="CLU_002794_4_1_9"/>
<dbReference type="OrthoDB" id="9804431at2"/>
<dbReference type="Proteomes" id="UP000000269">
    <property type="component" value="Chromosome"/>
</dbReference>
<dbReference type="GO" id="GO:0005737">
    <property type="term" value="C:cytoplasm"/>
    <property type="evidence" value="ECO:0007669"/>
    <property type="project" value="UniProtKB-SubCell"/>
</dbReference>
<dbReference type="GO" id="GO:0005525">
    <property type="term" value="F:GTP binding"/>
    <property type="evidence" value="ECO:0007669"/>
    <property type="project" value="UniProtKB-UniRule"/>
</dbReference>
<dbReference type="GO" id="GO:0003924">
    <property type="term" value="F:GTPase activity"/>
    <property type="evidence" value="ECO:0007669"/>
    <property type="project" value="InterPro"/>
</dbReference>
<dbReference type="GO" id="GO:0003746">
    <property type="term" value="F:translation elongation factor activity"/>
    <property type="evidence" value="ECO:0007669"/>
    <property type="project" value="UniProtKB-UniRule"/>
</dbReference>
<dbReference type="GO" id="GO:0032790">
    <property type="term" value="P:ribosome disassembly"/>
    <property type="evidence" value="ECO:0007669"/>
    <property type="project" value="TreeGrafter"/>
</dbReference>
<dbReference type="CDD" id="cd01886">
    <property type="entry name" value="EF-G"/>
    <property type="match status" value="1"/>
</dbReference>
<dbReference type="CDD" id="cd16262">
    <property type="entry name" value="EFG_III"/>
    <property type="match status" value="1"/>
</dbReference>
<dbReference type="CDD" id="cd01434">
    <property type="entry name" value="EFG_mtEFG1_IV"/>
    <property type="match status" value="1"/>
</dbReference>
<dbReference type="CDD" id="cd03713">
    <property type="entry name" value="EFG_mtEFG_C"/>
    <property type="match status" value="1"/>
</dbReference>
<dbReference type="CDD" id="cd04088">
    <property type="entry name" value="EFG_mtEFG_II"/>
    <property type="match status" value="1"/>
</dbReference>
<dbReference type="FunFam" id="2.40.30.10:FF:000006">
    <property type="entry name" value="Elongation factor G"/>
    <property type="match status" value="1"/>
</dbReference>
<dbReference type="FunFam" id="3.30.230.10:FF:000003">
    <property type="entry name" value="Elongation factor G"/>
    <property type="match status" value="1"/>
</dbReference>
<dbReference type="FunFam" id="3.30.70.240:FF:000001">
    <property type="entry name" value="Elongation factor G"/>
    <property type="match status" value="1"/>
</dbReference>
<dbReference type="FunFam" id="3.30.70.870:FF:000001">
    <property type="entry name" value="Elongation factor G"/>
    <property type="match status" value="1"/>
</dbReference>
<dbReference type="FunFam" id="3.40.50.300:FF:000029">
    <property type="entry name" value="Elongation factor G"/>
    <property type="match status" value="1"/>
</dbReference>
<dbReference type="Gene3D" id="3.30.230.10">
    <property type="match status" value="1"/>
</dbReference>
<dbReference type="Gene3D" id="3.30.70.240">
    <property type="match status" value="1"/>
</dbReference>
<dbReference type="Gene3D" id="3.30.70.870">
    <property type="entry name" value="Elongation Factor G (Translational Gtpase), domain 3"/>
    <property type="match status" value="1"/>
</dbReference>
<dbReference type="Gene3D" id="3.40.50.300">
    <property type="entry name" value="P-loop containing nucleotide triphosphate hydrolases"/>
    <property type="match status" value="1"/>
</dbReference>
<dbReference type="Gene3D" id="2.40.30.10">
    <property type="entry name" value="Translation factors"/>
    <property type="match status" value="1"/>
</dbReference>
<dbReference type="HAMAP" id="MF_00054_B">
    <property type="entry name" value="EF_G_EF_2_B"/>
    <property type="match status" value="1"/>
</dbReference>
<dbReference type="InterPro" id="IPR053905">
    <property type="entry name" value="EF-G-like_DII"/>
</dbReference>
<dbReference type="InterPro" id="IPR041095">
    <property type="entry name" value="EFG_II"/>
</dbReference>
<dbReference type="InterPro" id="IPR009022">
    <property type="entry name" value="EFG_III"/>
</dbReference>
<dbReference type="InterPro" id="IPR035647">
    <property type="entry name" value="EFG_III/V"/>
</dbReference>
<dbReference type="InterPro" id="IPR047872">
    <property type="entry name" value="EFG_IV"/>
</dbReference>
<dbReference type="InterPro" id="IPR035649">
    <property type="entry name" value="EFG_V"/>
</dbReference>
<dbReference type="InterPro" id="IPR000640">
    <property type="entry name" value="EFG_V-like"/>
</dbReference>
<dbReference type="InterPro" id="IPR031157">
    <property type="entry name" value="G_TR_CS"/>
</dbReference>
<dbReference type="InterPro" id="IPR027417">
    <property type="entry name" value="P-loop_NTPase"/>
</dbReference>
<dbReference type="InterPro" id="IPR020568">
    <property type="entry name" value="Ribosomal_Su5_D2-typ_SF"/>
</dbReference>
<dbReference type="InterPro" id="IPR014721">
    <property type="entry name" value="Ribsml_uS5_D2-typ_fold_subgr"/>
</dbReference>
<dbReference type="InterPro" id="IPR005225">
    <property type="entry name" value="Small_GTP-bd"/>
</dbReference>
<dbReference type="InterPro" id="IPR000795">
    <property type="entry name" value="T_Tr_GTP-bd_dom"/>
</dbReference>
<dbReference type="InterPro" id="IPR009000">
    <property type="entry name" value="Transl_B-barrel_sf"/>
</dbReference>
<dbReference type="InterPro" id="IPR004540">
    <property type="entry name" value="Transl_elong_EFG/EF2"/>
</dbReference>
<dbReference type="InterPro" id="IPR005517">
    <property type="entry name" value="Transl_elong_EFG/EF2_IV"/>
</dbReference>
<dbReference type="NCBIfam" id="TIGR00484">
    <property type="entry name" value="EF-G"/>
    <property type="match status" value="1"/>
</dbReference>
<dbReference type="NCBIfam" id="NF009379">
    <property type="entry name" value="PRK12740.1-3"/>
    <property type="match status" value="1"/>
</dbReference>
<dbReference type="NCBIfam" id="NF009381">
    <property type="entry name" value="PRK12740.1-5"/>
    <property type="match status" value="1"/>
</dbReference>
<dbReference type="NCBIfam" id="TIGR00231">
    <property type="entry name" value="small_GTP"/>
    <property type="match status" value="1"/>
</dbReference>
<dbReference type="PANTHER" id="PTHR43261:SF1">
    <property type="entry name" value="RIBOSOME-RELEASING FACTOR 2, MITOCHONDRIAL"/>
    <property type="match status" value="1"/>
</dbReference>
<dbReference type="PANTHER" id="PTHR43261">
    <property type="entry name" value="TRANSLATION ELONGATION FACTOR G-RELATED"/>
    <property type="match status" value="1"/>
</dbReference>
<dbReference type="Pfam" id="PF22042">
    <property type="entry name" value="EF-G_D2"/>
    <property type="match status" value="1"/>
</dbReference>
<dbReference type="Pfam" id="PF00679">
    <property type="entry name" value="EFG_C"/>
    <property type="match status" value="1"/>
</dbReference>
<dbReference type="Pfam" id="PF14492">
    <property type="entry name" value="EFG_III"/>
    <property type="match status" value="1"/>
</dbReference>
<dbReference type="Pfam" id="PF03764">
    <property type="entry name" value="EFG_IV"/>
    <property type="match status" value="1"/>
</dbReference>
<dbReference type="Pfam" id="PF00009">
    <property type="entry name" value="GTP_EFTU"/>
    <property type="match status" value="1"/>
</dbReference>
<dbReference type="PRINTS" id="PR00315">
    <property type="entry name" value="ELONGATNFCT"/>
</dbReference>
<dbReference type="SMART" id="SM00838">
    <property type="entry name" value="EFG_C"/>
    <property type="match status" value="1"/>
</dbReference>
<dbReference type="SMART" id="SM00889">
    <property type="entry name" value="EFG_IV"/>
    <property type="match status" value="1"/>
</dbReference>
<dbReference type="SUPFAM" id="SSF54980">
    <property type="entry name" value="EF-G C-terminal domain-like"/>
    <property type="match status" value="2"/>
</dbReference>
<dbReference type="SUPFAM" id="SSF52540">
    <property type="entry name" value="P-loop containing nucleoside triphosphate hydrolases"/>
    <property type="match status" value="1"/>
</dbReference>
<dbReference type="SUPFAM" id="SSF54211">
    <property type="entry name" value="Ribosomal protein S5 domain 2-like"/>
    <property type="match status" value="1"/>
</dbReference>
<dbReference type="SUPFAM" id="SSF50447">
    <property type="entry name" value="Translation proteins"/>
    <property type="match status" value="1"/>
</dbReference>
<dbReference type="PROSITE" id="PS00301">
    <property type="entry name" value="G_TR_1"/>
    <property type="match status" value="1"/>
</dbReference>
<dbReference type="PROSITE" id="PS51722">
    <property type="entry name" value="G_TR_2"/>
    <property type="match status" value="1"/>
</dbReference>
<sequence length="690" mass="76370">MPRQISLEKTRNIGIMAHIDAGKTTTTERILFYAGKIRKVAETHEGGAQMDWMEQEKERGITITSAATTCQWKEHKVNIIDTPGHVDFTVEVERSLRVLDGSVAVFCAKGGVQPQSETVWRQADKYRVPRMAFINKMDILGADFYQTIGMIKDRLGTNPVPLQLPIGKEDTFVGIVDLIKMNAVIYKDDLGQDMETTEIPEDMKELAREYREKLVEAAAETDEELMMKYLEGEELTEEEIVAGIRRGTVNVQFTPVICGSSYKNKGVQLLLDAVVAYMPSPLDIPAIKGITPDDEEEVERHSDDNEPFSALAFKIMADPYVGKLAFFRVYSGVLDAGSHVLNSTKGKRERIGRILQMHANTREEVSTVYAGDIAAAVGLKDTTTGDTLCDPDHVVILESMVFPEPVIHVAVEPKTKAGQEKMGIALQKLAEEDPTFKTYTDEETGQTIIAGMGELHLEIIVDRLLREFKVEANVGKPQVAYKETITQAVEVECKYARQSGGRGQYGHVKIRVIPQEPGKGYEFANQVVGGTIPKEYIPAVDAGIQGAMQAGVLGGYEVVDVRVELYDGSYHDVDSSEMAFKIAGSMAFKDGMRKGKAVLLEPYMKVEVTTPEDYMGEVIGDLNSRRGKIEGMEARSNGMQVINAYVPLSEMFGYATDLRSKTQGRATYSMHFDHYEAVPASIAEKITASK</sequence>
<accession>A8MLD7</accession>
<feature type="chain" id="PRO_1000057385" description="Elongation factor G">
    <location>
        <begin position="1"/>
        <end position="690"/>
    </location>
</feature>
<feature type="domain" description="tr-type G">
    <location>
        <begin position="8"/>
        <end position="282"/>
    </location>
</feature>
<feature type="binding site" evidence="1">
    <location>
        <begin position="17"/>
        <end position="24"/>
    </location>
    <ligand>
        <name>GTP</name>
        <dbReference type="ChEBI" id="CHEBI:37565"/>
    </ligand>
</feature>
<feature type="binding site" evidence="1">
    <location>
        <begin position="81"/>
        <end position="85"/>
    </location>
    <ligand>
        <name>GTP</name>
        <dbReference type="ChEBI" id="CHEBI:37565"/>
    </ligand>
</feature>
<feature type="binding site" evidence="1">
    <location>
        <begin position="135"/>
        <end position="138"/>
    </location>
    <ligand>
        <name>GTP</name>
        <dbReference type="ChEBI" id="CHEBI:37565"/>
    </ligand>
</feature>